<organism>
    <name type="scientific">Pyrococcus horikoshii (strain ATCC 700860 / DSM 12428 / JCM 9974 / NBRC 100139 / OT-3)</name>
    <dbReference type="NCBI Taxonomy" id="70601"/>
    <lineage>
        <taxon>Archaea</taxon>
        <taxon>Methanobacteriati</taxon>
        <taxon>Methanobacteriota</taxon>
        <taxon>Thermococci</taxon>
        <taxon>Thermococcales</taxon>
        <taxon>Thermococcaceae</taxon>
        <taxon>Pyrococcus</taxon>
    </lineage>
</organism>
<feature type="chain" id="PRO_0000119728" description="Glutamate--tRNA ligase">
    <location>
        <begin position="1"/>
        <end position="570"/>
    </location>
</feature>
<feature type="short sequence motif" description="'HIGH' region" evidence="1">
    <location>
        <begin position="105"/>
        <end position="115"/>
    </location>
</feature>
<gene>
    <name evidence="1" type="primary">gltX</name>
    <name type="ordered locus">PH1686</name>
</gene>
<accession>O59314</accession>
<sequence length="570" mass="66125">MDVEKIALKHALINAIEHGGKANLKAVIGKVLGENPELRPRAKEIIPIINKVVEEVNSLARDEQLEKLKDIYPEYFEKKEEKKEKKGLPLLPKAEKGKVVTRFAPNPDGAFHLGNARAAILSYEYAKMYGGKFILRFDDTDPKVKRPEPIFYKMIIEDLEWLGIKPDEIVYASDRLEIYYKYAEELIKMGKAYVCTCPPEKFRELRDKGIPCPHRDEPVEVQLERWKKMLNGEYKEGEAVVRIKTDLNHPNPAVRDWPALRIIDNPNHPRTGNKYRVWPLYNFASAIDDHELGVTHIFRGQEHAENETRQRYIYEYFGWEYPVTIHHGRLSIEGVVLSKSKTRKGIEEGKYLGWDDPRLGTIRALRRRGILPEAIKELIIEVGLKKSDATISWENLAAINRKLVDPIANRYFFVADPIPMEVEGAPEFIAEIPLHPDHPERGVRRLKFTPERPVYVSKDDLNLLKPGNFVRLKDLFNVEILEVGDKIRARFYSFEYEIAKKNRWKMVHWVTEGRPCEVIIPEGDELVVRKGLLEKDAKVQVNEIVQFERFGFVRIDRIEGDKVIAIYAHK</sequence>
<comment type="function">
    <text evidence="1">Catalyzes the attachment of glutamate to tRNA(Glu) in a two-step reaction: glutamate is first activated by ATP to form Glu-AMP and then transferred to the acceptor end of tRNA(Glu).</text>
</comment>
<comment type="catalytic activity">
    <reaction evidence="1">
        <text>tRNA(Glu) + L-glutamate + ATP = L-glutamyl-tRNA(Glu) + AMP + diphosphate</text>
        <dbReference type="Rhea" id="RHEA:23540"/>
        <dbReference type="Rhea" id="RHEA-COMP:9663"/>
        <dbReference type="Rhea" id="RHEA-COMP:9680"/>
        <dbReference type="ChEBI" id="CHEBI:29985"/>
        <dbReference type="ChEBI" id="CHEBI:30616"/>
        <dbReference type="ChEBI" id="CHEBI:33019"/>
        <dbReference type="ChEBI" id="CHEBI:78442"/>
        <dbReference type="ChEBI" id="CHEBI:78520"/>
        <dbReference type="ChEBI" id="CHEBI:456215"/>
        <dbReference type="EC" id="6.1.1.17"/>
    </reaction>
</comment>
<comment type="subcellular location">
    <subcellularLocation>
        <location evidence="1">Cytoplasm</location>
    </subcellularLocation>
</comment>
<comment type="similarity">
    <text evidence="1">Belongs to the class-I aminoacyl-tRNA synthetase family. Glutamate--tRNA ligase type 2 subfamily.</text>
</comment>
<dbReference type="EC" id="6.1.1.17" evidence="1"/>
<dbReference type="EMBL" id="BA000001">
    <property type="protein sequence ID" value="BAA30798.1"/>
    <property type="molecule type" value="Genomic_DNA"/>
</dbReference>
<dbReference type="PIR" id="F71049">
    <property type="entry name" value="F71049"/>
</dbReference>
<dbReference type="RefSeq" id="WP_010885751.1">
    <property type="nucleotide sequence ID" value="NC_000961.1"/>
</dbReference>
<dbReference type="SMR" id="O59314"/>
<dbReference type="STRING" id="70601.gene:9378679"/>
<dbReference type="EnsemblBacteria" id="BAA30798">
    <property type="protein sequence ID" value="BAA30798"/>
    <property type="gene ID" value="BAA30798"/>
</dbReference>
<dbReference type="GeneID" id="1442532"/>
<dbReference type="KEGG" id="pho:PH1686"/>
<dbReference type="eggNOG" id="arCOG04302">
    <property type="taxonomic scope" value="Archaea"/>
</dbReference>
<dbReference type="OrthoDB" id="10470at2157"/>
<dbReference type="Proteomes" id="UP000000752">
    <property type="component" value="Chromosome"/>
</dbReference>
<dbReference type="GO" id="GO:0005829">
    <property type="term" value="C:cytosol"/>
    <property type="evidence" value="ECO:0007669"/>
    <property type="project" value="TreeGrafter"/>
</dbReference>
<dbReference type="GO" id="GO:0005524">
    <property type="term" value="F:ATP binding"/>
    <property type="evidence" value="ECO:0007669"/>
    <property type="project" value="UniProtKB-UniRule"/>
</dbReference>
<dbReference type="GO" id="GO:0004818">
    <property type="term" value="F:glutamate-tRNA ligase activity"/>
    <property type="evidence" value="ECO:0007669"/>
    <property type="project" value="UniProtKB-UniRule"/>
</dbReference>
<dbReference type="GO" id="GO:0043604">
    <property type="term" value="P:amide biosynthetic process"/>
    <property type="evidence" value="ECO:0007669"/>
    <property type="project" value="TreeGrafter"/>
</dbReference>
<dbReference type="GO" id="GO:0006424">
    <property type="term" value="P:glutamyl-tRNA aminoacylation"/>
    <property type="evidence" value="ECO:0007669"/>
    <property type="project" value="UniProtKB-UniRule"/>
</dbReference>
<dbReference type="CDD" id="cd09287">
    <property type="entry name" value="GluRS_non_core"/>
    <property type="match status" value="1"/>
</dbReference>
<dbReference type="FunFam" id="2.40.240.10:FF:000033">
    <property type="entry name" value="Glutamate--tRNA ligase"/>
    <property type="match status" value="1"/>
</dbReference>
<dbReference type="FunFam" id="3.40.50.620:FF:000222">
    <property type="entry name" value="Glutamate--tRNA ligase"/>
    <property type="match status" value="1"/>
</dbReference>
<dbReference type="Gene3D" id="2.40.240.100">
    <property type="match status" value="1"/>
</dbReference>
<dbReference type="Gene3D" id="3.40.50.620">
    <property type="entry name" value="HUPs"/>
    <property type="match status" value="1"/>
</dbReference>
<dbReference type="Gene3D" id="2.40.240.10">
    <property type="entry name" value="Ribosomal Protein L25, Chain P"/>
    <property type="match status" value="1"/>
</dbReference>
<dbReference type="HAMAP" id="MF_02076">
    <property type="entry name" value="Glu_tRNA_synth_type2"/>
    <property type="match status" value="1"/>
</dbReference>
<dbReference type="InterPro" id="IPR050132">
    <property type="entry name" value="Gln/Glu-tRNA_Ligase"/>
</dbReference>
<dbReference type="InterPro" id="IPR004526">
    <property type="entry name" value="Glu-tRNA-synth_arc/euk"/>
</dbReference>
<dbReference type="InterPro" id="IPR000924">
    <property type="entry name" value="Glu/Gln-tRNA-synth"/>
</dbReference>
<dbReference type="InterPro" id="IPR020058">
    <property type="entry name" value="Glu/Gln-tRNA-synth_Ib_cat-dom"/>
</dbReference>
<dbReference type="InterPro" id="IPR020059">
    <property type="entry name" value="Glu/Gln-tRNA-synth_Ib_codon-bd"/>
</dbReference>
<dbReference type="InterPro" id="IPR020056">
    <property type="entry name" value="Rbsml_bL25/Gln-tRNA_synth_N"/>
</dbReference>
<dbReference type="InterPro" id="IPR011035">
    <property type="entry name" value="Ribosomal_bL25/Gln-tRNA_synth"/>
</dbReference>
<dbReference type="InterPro" id="IPR014729">
    <property type="entry name" value="Rossmann-like_a/b/a_fold"/>
</dbReference>
<dbReference type="InterPro" id="IPR049437">
    <property type="entry name" value="tRNA-synt_1c_C2"/>
</dbReference>
<dbReference type="NCBIfam" id="TIGR00463">
    <property type="entry name" value="gltX_arch"/>
    <property type="match status" value="1"/>
</dbReference>
<dbReference type="NCBIfam" id="NF003169">
    <property type="entry name" value="PRK04156.1"/>
    <property type="match status" value="1"/>
</dbReference>
<dbReference type="PANTHER" id="PTHR43097:SF5">
    <property type="entry name" value="GLUTAMATE--TRNA LIGASE"/>
    <property type="match status" value="1"/>
</dbReference>
<dbReference type="PANTHER" id="PTHR43097">
    <property type="entry name" value="GLUTAMINE-TRNA LIGASE"/>
    <property type="match status" value="1"/>
</dbReference>
<dbReference type="Pfam" id="PF00749">
    <property type="entry name" value="tRNA-synt_1c"/>
    <property type="match status" value="1"/>
</dbReference>
<dbReference type="Pfam" id="PF03950">
    <property type="entry name" value="tRNA-synt_1c_C"/>
    <property type="match status" value="1"/>
</dbReference>
<dbReference type="Pfam" id="PF20974">
    <property type="entry name" value="tRNA-synt_1c_C2"/>
    <property type="match status" value="1"/>
</dbReference>
<dbReference type="PRINTS" id="PR00987">
    <property type="entry name" value="TRNASYNTHGLU"/>
</dbReference>
<dbReference type="SUPFAM" id="SSF52374">
    <property type="entry name" value="Nucleotidylyl transferase"/>
    <property type="match status" value="1"/>
</dbReference>
<dbReference type="SUPFAM" id="SSF50715">
    <property type="entry name" value="Ribosomal protein L25-like"/>
    <property type="match status" value="1"/>
</dbReference>
<keyword id="KW-0030">Aminoacyl-tRNA synthetase</keyword>
<keyword id="KW-0067">ATP-binding</keyword>
<keyword id="KW-0963">Cytoplasm</keyword>
<keyword id="KW-0436">Ligase</keyword>
<keyword id="KW-0547">Nucleotide-binding</keyword>
<keyword id="KW-0648">Protein biosynthesis</keyword>
<evidence type="ECO:0000255" key="1">
    <source>
        <dbReference type="HAMAP-Rule" id="MF_02076"/>
    </source>
</evidence>
<reference key="1">
    <citation type="journal article" date="1998" name="DNA Res.">
        <title>Complete sequence and gene organization of the genome of a hyper-thermophilic archaebacterium, Pyrococcus horikoshii OT3.</title>
        <authorList>
            <person name="Kawarabayasi Y."/>
            <person name="Sawada M."/>
            <person name="Horikawa H."/>
            <person name="Haikawa Y."/>
            <person name="Hino Y."/>
            <person name="Yamamoto S."/>
            <person name="Sekine M."/>
            <person name="Baba S."/>
            <person name="Kosugi H."/>
            <person name="Hosoyama A."/>
            <person name="Nagai Y."/>
            <person name="Sakai M."/>
            <person name="Ogura K."/>
            <person name="Otsuka R."/>
            <person name="Nakazawa H."/>
            <person name="Takamiya M."/>
            <person name="Ohfuku Y."/>
            <person name="Funahashi T."/>
            <person name="Tanaka T."/>
            <person name="Kudoh Y."/>
            <person name="Yamazaki J."/>
            <person name="Kushida N."/>
            <person name="Oguchi A."/>
            <person name="Aoki K."/>
            <person name="Yoshizawa T."/>
            <person name="Nakamura Y."/>
            <person name="Robb F.T."/>
            <person name="Horikoshi K."/>
            <person name="Masuchi Y."/>
            <person name="Shizuya H."/>
            <person name="Kikuchi H."/>
        </authorList>
    </citation>
    <scope>NUCLEOTIDE SEQUENCE [LARGE SCALE GENOMIC DNA]</scope>
    <source>
        <strain>ATCC 700860 / DSM 12428 / JCM 9974 / NBRC 100139 / OT-3</strain>
    </source>
</reference>
<protein>
    <recommendedName>
        <fullName evidence="1">Glutamate--tRNA ligase</fullName>
        <ecNumber evidence="1">6.1.1.17</ecNumber>
    </recommendedName>
    <alternativeName>
        <fullName evidence="1">Glutamyl-tRNA synthetase</fullName>
        <shortName evidence="1">GluRS</shortName>
    </alternativeName>
</protein>
<proteinExistence type="inferred from homology"/>
<name>SYE_PYRHO</name>